<dbReference type="EC" id="2.1.3.3"/>
<dbReference type="EMBL" id="L77117">
    <property type="protein sequence ID" value="AAB98885.1"/>
    <property type="molecule type" value="Genomic_DNA"/>
</dbReference>
<dbReference type="PIR" id="A64410">
    <property type="entry name" value="A64410"/>
</dbReference>
<dbReference type="RefSeq" id="WP_010870395.1">
    <property type="nucleotide sequence ID" value="NC_000909.1"/>
</dbReference>
<dbReference type="SMR" id="Q58291"/>
<dbReference type="FunCoup" id="Q58291">
    <property type="interactions" value="215"/>
</dbReference>
<dbReference type="STRING" id="243232.MJ_0881"/>
<dbReference type="PaxDb" id="243232-MJ_0881"/>
<dbReference type="EnsemblBacteria" id="AAB98885">
    <property type="protein sequence ID" value="AAB98885"/>
    <property type="gene ID" value="MJ_0881"/>
</dbReference>
<dbReference type="GeneID" id="1451770"/>
<dbReference type="KEGG" id="mja:MJ_0881"/>
<dbReference type="eggNOG" id="arCOG00912">
    <property type="taxonomic scope" value="Archaea"/>
</dbReference>
<dbReference type="HOGENOM" id="CLU_043846_3_2_2"/>
<dbReference type="InParanoid" id="Q58291"/>
<dbReference type="OrthoDB" id="4696at2157"/>
<dbReference type="PhylomeDB" id="Q58291"/>
<dbReference type="UniPathway" id="UPA00068">
    <property type="reaction ID" value="UER00112"/>
</dbReference>
<dbReference type="Proteomes" id="UP000000805">
    <property type="component" value="Chromosome"/>
</dbReference>
<dbReference type="GO" id="GO:0005737">
    <property type="term" value="C:cytoplasm"/>
    <property type="evidence" value="ECO:0007669"/>
    <property type="project" value="UniProtKB-SubCell"/>
</dbReference>
<dbReference type="GO" id="GO:0016597">
    <property type="term" value="F:amino acid binding"/>
    <property type="evidence" value="ECO:0007669"/>
    <property type="project" value="InterPro"/>
</dbReference>
<dbReference type="GO" id="GO:0004585">
    <property type="term" value="F:ornithine carbamoyltransferase activity"/>
    <property type="evidence" value="ECO:0000318"/>
    <property type="project" value="GO_Central"/>
</dbReference>
<dbReference type="GO" id="GO:0042450">
    <property type="term" value="P:arginine biosynthetic process via ornithine"/>
    <property type="evidence" value="ECO:0000318"/>
    <property type="project" value="GO_Central"/>
</dbReference>
<dbReference type="GO" id="GO:0019240">
    <property type="term" value="P:citrulline biosynthetic process"/>
    <property type="evidence" value="ECO:0000318"/>
    <property type="project" value="GO_Central"/>
</dbReference>
<dbReference type="GO" id="GO:0006526">
    <property type="term" value="P:L-arginine biosynthetic process"/>
    <property type="evidence" value="ECO:0007669"/>
    <property type="project" value="UniProtKB-UniRule"/>
</dbReference>
<dbReference type="FunFam" id="3.40.50.1370:FF:000008">
    <property type="entry name" value="Ornithine carbamoyltransferase"/>
    <property type="match status" value="1"/>
</dbReference>
<dbReference type="Gene3D" id="3.40.50.1370">
    <property type="entry name" value="Aspartate/ornithine carbamoyltransferase"/>
    <property type="match status" value="2"/>
</dbReference>
<dbReference type="HAMAP" id="MF_01109">
    <property type="entry name" value="OTCase"/>
    <property type="match status" value="1"/>
</dbReference>
<dbReference type="InterPro" id="IPR006132">
    <property type="entry name" value="Asp/Orn_carbamoyltranf_P-bd"/>
</dbReference>
<dbReference type="InterPro" id="IPR006130">
    <property type="entry name" value="Asp/Orn_carbamoylTrfase"/>
</dbReference>
<dbReference type="InterPro" id="IPR036901">
    <property type="entry name" value="Asp/Orn_carbamoylTrfase_sf"/>
</dbReference>
<dbReference type="InterPro" id="IPR006131">
    <property type="entry name" value="Asp_carbamoyltransf_Asp/Orn-bd"/>
</dbReference>
<dbReference type="InterPro" id="IPR002292">
    <property type="entry name" value="Orn/put_carbamltrans"/>
</dbReference>
<dbReference type="InterPro" id="IPR024904">
    <property type="entry name" value="OTCase_ArgI"/>
</dbReference>
<dbReference type="NCBIfam" id="TIGR00658">
    <property type="entry name" value="orni_carb_tr"/>
    <property type="match status" value="1"/>
</dbReference>
<dbReference type="NCBIfam" id="NF001986">
    <property type="entry name" value="PRK00779.1"/>
    <property type="match status" value="1"/>
</dbReference>
<dbReference type="PANTHER" id="PTHR45753">
    <property type="entry name" value="ORNITHINE CARBAMOYLTRANSFERASE, MITOCHONDRIAL"/>
    <property type="match status" value="1"/>
</dbReference>
<dbReference type="PANTHER" id="PTHR45753:SF3">
    <property type="entry name" value="ORNITHINE TRANSCARBAMYLASE, MITOCHONDRIAL"/>
    <property type="match status" value="1"/>
</dbReference>
<dbReference type="Pfam" id="PF00185">
    <property type="entry name" value="OTCace"/>
    <property type="match status" value="1"/>
</dbReference>
<dbReference type="Pfam" id="PF02729">
    <property type="entry name" value="OTCace_N"/>
    <property type="match status" value="1"/>
</dbReference>
<dbReference type="PRINTS" id="PR00100">
    <property type="entry name" value="AOTCASE"/>
</dbReference>
<dbReference type="PRINTS" id="PR00102">
    <property type="entry name" value="OTCASE"/>
</dbReference>
<dbReference type="SUPFAM" id="SSF53671">
    <property type="entry name" value="Aspartate/ornithine carbamoyltransferase"/>
    <property type="match status" value="1"/>
</dbReference>
<dbReference type="PROSITE" id="PS00097">
    <property type="entry name" value="CARBAMOYLTRANSFERASE"/>
    <property type="match status" value="1"/>
</dbReference>
<name>OTC_METJA</name>
<gene>
    <name type="primary">argF</name>
    <name type="ordered locus">MJ0881</name>
</gene>
<evidence type="ECO:0000250" key="1"/>
<evidence type="ECO:0000255" key="2">
    <source>
        <dbReference type="HAMAP-Rule" id="MF_01109"/>
    </source>
</evidence>
<evidence type="ECO:0000305" key="3"/>
<protein>
    <recommendedName>
        <fullName>Ornithine carbamoyltransferase</fullName>
        <shortName>OTCase</shortName>
        <ecNumber>2.1.3.3</ecNumber>
    </recommendedName>
</protein>
<organism>
    <name type="scientific">Methanocaldococcus jannaschii (strain ATCC 43067 / DSM 2661 / JAL-1 / JCM 10045 / NBRC 100440)</name>
    <name type="common">Methanococcus jannaschii</name>
    <dbReference type="NCBI Taxonomy" id="243232"/>
    <lineage>
        <taxon>Archaea</taxon>
        <taxon>Methanobacteriati</taxon>
        <taxon>Methanobacteriota</taxon>
        <taxon>Methanomada group</taxon>
        <taxon>Methanococci</taxon>
        <taxon>Methanococcales</taxon>
        <taxon>Methanocaldococcaceae</taxon>
        <taxon>Methanocaldococcus</taxon>
    </lineage>
</organism>
<sequence length="305" mass="34569">MHLLDLDVLSREDVLKIIEYGIYFKKNRRKHEKILEGKSVAILFEKPSTRTRMSFDIAVYELGGHPLIMNQNEIHLGKKESIKDTAKVMGRYVDTIVARVYKHRHLEEMAKYSSVPVINALSDLAHPCQILADLMTIKEYKGKFKGLKIAYLGDGNNVCNSLILGSALVGMDTYVGTPKGYEPNAKVVLKAKEIINNYGEGSLTLTNDPIEAAEDADVLYTDVWISMGDDKDKEEVLKIFPPFQINSKLLEYAKDDVIVMHCLPANRGYEITDDVIDGEHSVVYDEAENRLHVQKGVFKFIFERK</sequence>
<keyword id="KW-0028">Amino-acid biosynthesis</keyword>
<keyword id="KW-0055">Arginine biosynthesis</keyword>
<keyword id="KW-0963">Cytoplasm</keyword>
<keyword id="KW-1185">Reference proteome</keyword>
<keyword id="KW-0808">Transferase</keyword>
<accession>Q58291</accession>
<comment type="function">
    <text evidence="1">Reversibly catalyzes the transfer of the carbamoyl group from carbamoyl phosphate (CP) to the N(epsilon) atom of ornithine (ORN) to produce L-citrulline.</text>
</comment>
<comment type="catalytic activity">
    <reaction>
        <text>carbamoyl phosphate + L-ornithine = L-citrulline + phosphate + H(+)</text>
        <dbReference type="Rhea" id="RHEA:19513"/>
        <dbReference type="ChEBI" id="CHEBI:15378"/>
        <dbReference type="ChEBI" id="CHEBI:43474"/>
        <dbReference type="ChEBI" id="CHEBI:46911"/>
        <dbReference type="ChEBI" id="CHEBI:57743"/>
        <dbReference type="ChEBI" id="CHEBI:58228"/>
        <dbReference type="EC" id="2.1.3.3"/>
    </reaction>
</comment>
<comment type="pathway">
    <text>Amino-acid biosynthesis; L-arginine biosynthesis; L-arginine from L-ornithine and carbamoyl phosphate: step 1/3.</text>
</comment>
<comment type="subcellular location">
    <subcellularLocation>
        <location evidence="1">Cytoplasm</location>
    </subcellularLocation>
</comment>
<comment type="similarity">
    <text evidence="3">Belongs to the aspartate/ornithine carbamoyltransferase superfamily. OTCase family.</text>
</comment>
<proteinExistence type="inferred from homology"/>
<reference key="1">
    <citation type="journal article" date="1996" name="Science">
        <title>Complete genome sequence of the methanogenic archaeon, Methanococcus jannaschii.</title>
        <authorList>
            <person name="Bult C.J."/>
            <person name="White O."/>
            <person name="Olsen G.J."/>
            <person name="Zhou L."/>
            <person name="Fleischmann R.D."/>
            <person name="Sutton G.G."/>
            <person name="Blake J.A."/>
            <person name="FitzGerald L.M."/>
            <person name="Clayton R.A."/>
            <person name="Gocayne J.D."/>
            <person name="Kerlavage A.R."/>
            <person name="Dougherty B.A."/>
            <person name="Tomb J.-F."/>
            <person name="Adams M.D."/>
            <person name="Reich C.I."/>
            <person name="Overbeek R."/>
            <person name="Kirkness E.F."/>
            <person name="Weinstock K.G."/>
            <person name="Merrick J.M."/>
            <person name="Glodek A."/>
            <person name="Scott J.L."/>
            <person name="Geoghagen N.S.M."/>
            <person name="Weidman J.F."/>
            <person name="Fuhrmann J.L."/>
            <person name="Nguyen D."/>
            <person name="Utterback T.R."/>
            <person name="Kelley J.M."/>
            <person name="Peterson J.D."/>
            <person name="Sadow P.W."/>
            <person name="Hanna M.C."/>
            <person name="Cotton M.D."/>
            <person name="Roberts K.M."/>
            <person name="Hurst M.A."/>
            <person name="Kaine B.P."/>
            <person name="Borodovsky M."/>
            <person name="Klenk H.-P."/>
            <person name="Fraser C.M."/>
            <person name="Smith H.O."/>
            <person name="Woese C.R."/>
            <person name="Venter J.C."/>
        </authorList>
    </citation>
    <scope>NUCLEOTIDE SEQUENCE [LARGE SCALE GENOMIC DNA]</scope>
    <source>
        <strain>ATCC 43067 / DSM 2661 / JAL-1 / JCM 10045 / NBRC 100440</strain>
    </source>
</reference>
<feature type="chain" id="PRO_0000113065" description="Ornithine carbamoyltransferase">
    <location>
        <begin position="1"/>
        <end position="305"/>
    </location>
</feature>
<feature type="binding site" evidence="2">
    <location>
        <begin position="48"/>
        <end position="51"/>
    </location>
    <ligand>
        <name>carbamoyl phosphate</name>
        <dbReference type="ChEBI" id="CHEBI:58228"/>
    </ligand>
</feature>
<feature type="binding site" evidence="2">
    <location>
        <position position="99"/>
    </location>
    <ligand>
        <name>carbamoyl phosphate</name>
        <dbReference type="ChEBI" id="CHEBI:58228"/>
    </ligand>
</feature>
<feature type="binding site" evidence="2">
    <location>
        <begin position="126"/>
        <end position="129"/>
    </location>
    <ligand>
        <name>carbamoyl phosphate</name>
        <dbReference type="ChEBI" id="CHEBI:58228"/>
    </ligand>
</feature>
<feature type="binding site" evidence="2">
    <location>
        <position position="157"/>
    </location>
    <ligand>
        <name>L-ornithine</name>
        <dbReference type="ChEBI" id="CHEBI:46911"/>
    </ligand>
</feature>
<feature type="binding site" evidence="2">
    <location>
        <position position="222"/>
    </location>
    <ligand>
        <name>L-ornithine</name>
        <dbReference type="ChEBI" id="CHEBI:46911"/>
    </ligand>
</feature>
<feature type="binding site" evidence="2">
    <location>
        <begin position="226"/>
        <end position="227"/>
    </location>
    <ligand>
        <name>L-ornithine</name>
        <dbReference type="ChEBI" id="CHEBI:46911"/>
    </ligand>
</feature>
<feature type="binding site" evidence="2">
    <location>
        <begin position="262"/>
        <end position="263"/>
    </location>
    <ligand>
        <name>carbamoyl phosphate</name>
        <dbReference type="ChEBI" id="CHEBI:58228"/>
    </ligand>
</feature>
<feature type="binding site" evidence="2">
    <location>
        <position position="290"/>
    </location>
    <ligand>
        <name>carbamoyl phosphate</name>
        <dbReference type="ChEBI" id="CHEBI:58228"/>
    </ligand>
</feature>